<reference key="1">
    <citation type="journal article" date="2003" name="Lancet">
        <title>Sequencing and analysis of the genome of the Whipple's disease bacterium Tropheryma whipplei.</title>
        <authorList>
            <person name="Bentley S.D."/>
            <person name="Maiwald M."/>
            <person name="Murphy L.D."/>
            <person name="Pallen M.J."/>
            <person name="Yeats C.A."/>
            <person name="Dover L.G."/>
            <person name="Norbertczak H.T."/>
            <person name="Besra G.S."/>
            <person name="Quail M.A."/>
            <person name="Harris D.E."/>
            <person name="von Herbay A."/>
            <person name="Goble A."/>
            <person name="Rutter S."/>
            <person name="Squares R."/>
            <person name="Squares S."/>
            <person name="Barrell B.G."/>
            <person name="Parkhill J."/>
            <person name="Relman D.A."/>
        </authorList>
    </citation>
    <scope>NUCLEOTIDE SEQUENCE [LARGE SCALE GENOMIC DNA]</scope>
    <source>
        <strain>TW08/27</strain>
    </source>
</reference>
<gene>
    <name evidence="1" type="primary">pdxS</name>
    <name type="ordered locus">TW506</name>
</gene>
<keyword id="KW-0456">Lyase</keyword>
<keyword id="KW-0663">Pyridoxal phosphate</keyword>
<keyword id="KW-0704">Schiff base</keyword>
<evidence type="ECO:0000255" key="1">
    <source>
        <dbReference type="HAMAP-Rule" id="MF_01824"/>
    </source>
</evidence>
<protein>
    <recommendedName>
        <fullName evidence="1">Pyridoxal 5'-phosphate synthase subunit PdxS</fullName>
        <shortName evidence="1">PLP synthase subunit PdxS</shortName>
        <ecNumber evidence="1">4.3.3.6</ecNumber>
    </recommendedName>
    <alternativeName>
        <fullName evidence="1">Pdx1</fullName>
    </alternativeName>
</protein>
<sequence>MGLDNLKVGLAQMLKGGVIMDVVTPDQAKIAEDAGAVAVMALEKIPSDIRASGGVSRMSDPGLIERVMDSVSIPVMAKVRIGHFAEAQILQSLKVDYIDESEVLSVADSSYHIDKRKFTVPFVCGATNLGEALRRISEGASMIRSKGEAGTGDIAQATKHIRAILSEISALTQAREDELPARARELGAPIDLVRETARLGRLPVVLFTAGGIATPADSSLVMQLGSDGVFVGSGIFKSEDPKAYAAAIVQATAQYDDADLLARVSRNLGQAMPGVSNLDVRFSSRGV</sequence>
<proteinExistence type="inferred from homology"/>
<comment type="function">
    <text evidence="1">Catalyzes the formation of pyridoxal 5'-phosphate from ribose 5-phosphate (RBP), glyceraldehyde 3-phosphate (G3P) and ammonia. The ammonia is provided by the PdxT subunit. Can also use ribulose 5-phosphate and dihydroxyacetone phosphate as substrates, resulting from enzyme-catalyzed isomerization of RBP and G3P, respectively.</text>
</comment>
<comment type="catalytic activity">
    <reaction evidence="1">
        <text>aldehydo-D-ribose 5-phosphate + D-glyceraldehyde 3-phosphate + L-glutamine = pyridoxal 5'-phosphate + L-glutamate + phosphate + 3 H2O + H(+)</text>
        <dbReference type="Rhea" id="RHEA:31507"/>
        <dbReference type="ChEBI" id="CHEBI:15377"/>
        <dbReference type="ChEBI" id="CHEBI:15378"/>
        <dbReference type="ChEBI" id="CHEBI:29985"/>
        <dbReference type="ChEBI" id="CHEBI:43474"/>
        <dbReference type="ChEBI" id="CHEBI:58273"/>
        <dbReference type="ChEBI" id="CHEBI:58359"/>
        <dbReference type="ChEBI" id="CHEBI:59776"/>
        <dbReference type="ChEBI" id="CHEBI:597326"/>
        <dbReference type="EC" id="4.3.3.6"/>
    </reaction>
</comment>
<comment type="pathway">
    <text evidence="1">Cofactor biosynthesis; pyridoxal 5'-phosphate biosynthesis.</text>
</comment>
<comment type="subunit">
    <text evidence="1">In the presence of PdxT, forms a dodecamer of heterodimers.</text>
</comment>
<comment type="similarity">
    <text evidence="1">Belongs to the PdxS/SNZ family.</text>
</comment>
<dbReference type="EC" id="4.3.3.6" evidence="1"/>
<dbReference type="EMBL" id="BX251411">
    <property type="protein sequence ID" value="CAD67173.1"/>
    <property type="molecule type" value="Genomic_DNA"/>
</dbReference>
<dbReference type="RefSeq" id="WP_011096453.1">
    <property type="nucleotide sequence ID" value="NC_004551.1"/>
</dbReference>
<dbReference type="SMR" id="Q83HM5"/>
<dbReference type="GeneID" id="67388285"/>
<dbReference type="KEGG" id="tws:TW506"/>
<dbReference type="HOGENOM" id="CLU_055352_1_0_11"/>
<dbReference type="UniPathway" id="UPA00245"/>
<dbReference type="GO" id="GO:0036381">
    <property type="term" value="F:pyridoxal 5'-phosphate synthase (glutamine hydrolysing) activity"/>
    <property type="evidence" value="ECO:0007669"/>
    <property type="project" value="UniProtKB-UniRule"/>
</dbReference>
<dbReference type="GO" id="GO:0006520">
    <property type="term" value="P:amino acid metabolic process"/>
    <property type="evidence" value="ECO:0007669"/>
    <property type="project" value="TreeGrafter"/>
</dbReference>
<dbReference type="GO" id="GO:0042823">
    <property type="term" value="P:pyridoxal phosphate biosynthetic process"/>
    <property type="evidence" value="ECO:0007669"/>
    <property type="project" value="UniProtKB-UniRule"/>
</dbReference>
<dbReference type="GO" id="GO:0008615">
    <property type="term" value="P:pyridoxine biosynthetic process"/>
    <property type="evidence" value="ECO:0007669"/>
    <property type="project" value="TreeGrafter"/>
</dbReference>
<dbReference type="CDD" id="cd04727">
    <property type="entry name" value="pdxS"/>
    <property type="match status" value="1"/>
</dbReference>
<dbReference type="FunFam" id="3.20.20.70:FF:000001">
    <property type="entry name" value="Pyridoxine biosynthesis protein PDX1"/>
    <property type="match status" value="1"/>
</dbReference>
<dbReference type="Gene3D" id="3.20.20.70">
    <property type="entry name" value="Aldolase class I"/>
    <property type="match status" value="1"/>
</dbReference>
<dbReference type="HAMAP" id="MF_01824">
    <property type="entry name" value="PdxS"/>
    <property type="match status" value="1"/>
</dbReference>
<dbReference type="InterPro" id="IPR013785">
    <property type="entry name" value="Aldolase_TIM"/>
</dbReference>
<dbReference type="InterPro" id="IPR001852">
    <property type="entry name" value="PdxS/SNZ"/>
</dbReference>
<dbReference type="InterPro" id="IPR033755">
    <property type="entry name" value="PdxS/SNZ_N"/>
</dbReference>
<dbReference type="InterPro" id="IPR011060">
    <property type="entry name" value="RibuloseP-bd_barrel"/>
</dbReference>
<dbReference type="NCBIfam" id="NF003215">
    <property type="entry name" value="PRK04180.1"/>
    <property type="match status" value="1"/>
</dbReference>
<dbReference type="NCBIfam" id="TIGR00343">
    <property type="entry name" value="pyridoxal 5'-phosphate synthase lyase subunit PdxS"/>
    <property type="match status" value="1"/>
</dbReference>
<dbReference type="PANTHER" id="PTHR31829">
    <property type="entry name" value="PYRIDOXAL 5'-PHOSPHATE SYNTHASE SUBUNIT SNZ1-RELATED"/>
    <property type="match status" value="1"/>
</dbReference>
<dbReference type="PANTHER" id="PTHR31829:SF0">
    <property type="entry name" value="PYRIDOXAL 5'-PHOSPHATE SYNTHASE SUBUNIT SNZ1-RELATED"/>
    <property type="match status" value="1"/>
</dbReference>
<dbReference type="Pfam" id="PF01680">
    <property type="entry name" value="SOR_SNZ"/>
    <property type="match status" value="1"/>
</dbReference>
<dbReference type="PIRSF" id="PIRSF029271">
    <property type="entry name" value="Pdx1"/>
    <property type="match status" value="1"/>
</dbReference>
<dbReference type="SUPFAM" id="SSF51366">
    <property type="entry name" value="Ribulose-phoshate binding barrel"/>
    <property type="match status" value="1"/>
</dbReference>
<dbReference type="PROSITE" id="PS01235">
    <property type="entry name" value="PDXS_SNZ_1"/>
    <property type="match status" value="1"/>
</dbReference>
<dbReference type="PROSITE" id="PS51129">
    <property type="entry name" value="PDXS_SNZ_2"/>
    <property type="match status" value="1"/>
</dbReference>
<feature type="chain" id="PRO_0000109428" description="Pyridoxal 5'-phosphate synthase subunit PdxS">
    <location>
        <begin position="1"/>
        <end position="287"/>
    </location>
</feature>
<feature type="active site" description="Schiff-base intermediate with D-ribose 5-phosphate" evidence="1">
    <location>
        <position position="78"/>
    </location>
</feature>
<feature type="binding site" evidence="1">
    <location>
        <position position="21"/>
    </location>
    <ligand>
        <name>D-ribose 5-phosphate</name>
        <dbReference type="ChEBI" id="CHEBI:78346"/>
    </ligand>
</feature>
<feature type="binding site" evidence="1">
    <location>
        <position position="150"/>
    </location>
    <ligand>
        <name>D-ribose 5-phosphate</name>
        <dbReference type="ChEBI" id="CHEBI:78346"/>
    </ligand>
</feature>
<feature type="binding site" evidence="1">
    <location>
        <position position="162"/>
    </location>
    <ligand>
        <name>D-glyceraldehyde 3-phosphate</name>
        <dbReference type="ChEBI" id="CHEBI:59776"/>
    </ligand>
</feature>
<feature type="binding site" evidence="1">
    <location>
        <position position="211"/>
    </location>
    <ligand>
        <name>D-ribose 5-phosphate</name>
        <dbReference type="ChEBI" id="CHEBI:78346"/>
    </ligand>
</feature>
<feature type="binding site" evidence="1">
    <location>
        <begin position="232"/>
        <end position="233"/>
    </location>
    <ligand>
        <name>D-ribose 5-phosphate</name>
        <dbReference type="ChEBI" id="CHEBI:78346"/>
    </ligand>
</feature>
<organism>
    <name type="scientific">Tropheryma whipplei (strain TW08/27)</name>
    <name type="common">Whipple's bacillus</name>
    <dbReference type="NCBI Taxonomy" id="218496"/>
    <lineage>
        <taxon>Bacteria</taxon>
        <taxon>Bacillati</taxon>
        <taxon>Actinomycetota</taxon>
        <taxon>Actinomycetes</taxon>
        <taxon>Micrococcales</taxon>
        <taxon>Tropherymataceae</taxon>
        <taxon>Tropheryma</taxon>
    </lineage>
</organism>
<accession>Q83HM5</accession>
<name>PDXS_TROW8</name>